<evidence type="ECO:0000255" key="1">
    <source>
        <dbReference type="PROSITE-ProRule" id="PRU01345"/>
    </source>
</evidence>
<evidence type="ECO:0000255" key="2">
    <source>
        <dbReference type="PROSITE-ProRule" id="PRU01346"/>
    </source>
</evidence>
<evidence type="ECO:0000256" key="3">
    <source>
        <dbReference type="SAM" id="MobiDB-lite"/>
    </source>
</evidence>
<evidence type="ECO:0000269" key="4">
    <source>
    </source>
</evidence>
<evidence type="ECO:0000303" key="5">
    <source>
    </source>
</evidence>
<evidence type="ECO:0000303" key="6">
    <source>
    </source>
</evidence>
<evidence type="ECO:0000305" key="7">
    <source>
    </source>
</evidence>
<evidence type="ECO:0000312" key="8">
    <source>
        <dbReference type="FlyBase" id="FBgn0030364"/>
    </source>
</evidence>
<evidence type="ECO:0000312" key="9">
    <source>
        <dbReference type="Proteomes" id="UP000000803"/>
    </source>
</evidence>
<comment type="function">
    <text evidence="4">Component of the Atx2-tyf activator complex which functions in the circadian pacemaker neurons to activate the TYF-dependent translation of per and maintain 24 hour periodicity in circadian behaviors. Within the Atx2-tyf complex, likely to function as a molecular adapter which stabilizes the interaction between Atx2 and the translational regulator tyf.</text>
</comment>
<comment type="subunit">
    <text evidence="4">Component of the Atx2-tyf activator complex, composed of Atx2, tyf, pAbp, Lsm12a. Interacts with tyf, Atx2 and pAbp.</text>
</comment>
<comment type="disruption phenotype">
    <text evidence="4">RNAi-mediated knockdown in pigment dispersing factor (Pdf)-expressing clock neurons disrupts circadian locomotor rhythms, with mutants displaying long period locomotor rhythms under constant dark conditions. Enhances the period-lengthening phenotype of tyf mutants.</text>
</comment>
<comment type="similarity">
    <text evidence="7">Belongs to the LSM12 family.</text>
</comment>
<organism evidence="9">
    <name type="scientific">Drosophila melanogaster</name>
    <name type="common">Fruit fly</name>
    <dbReference type="NCBI Taxonomy" id="7227"/>
    <lineage>
        <taxon>Eukaryota</taxon>
        <taxon>Metazoa</taxon>
        <taxon>Ecdysozoa</taxon>
        <taxon>Arthropoda</taxon>
        <taxon>Hexapoda</taxon>
        <taxon>Insecta</taxon>
        <taxon>Pterygota</taxon>
        <taxon>Neoptera</taxon>
        <taxon>Endopterygota</taxon>
        <taxon>Diptera</taxon>
        <taxon>Brachycera</taxon>
        <taxon>Muscomorpha</taxon>
        <taxon>Ephydroidea</taxon>
        <taxon>Drosophilidae</taxon>
        <taxon>Drosophila</taxon>
        <taxon>Sophophora</taxon>
    </lineage>
</organism>
<accession>Q9VYR0</accession>
<accession>Q8T0F6</accession>
<dbReference type="EMBL" id="AE014298">
    <property type="protein sequence ID" value="AAF48132.2"/>
    <property type="molecule type" value="Genomic_DNA"/>
</dbReference>
<dbReference type="EMBL" id="AY069351">
    <property type="protein sequence ID" value="AAL39496.1"/>
    <property type="molecule type" value="mRNA"/>
</dbReference>
<dbReference type="RefSeq" id="NP_572777.2">
    <property type="nucleotide sequence ID" value="NM_132549.3"/>
</dbReference>
<dbReference type="BioGRID" id="58572">
    <property type="interactions" value="7"/>
</dbReference>
<dbReference type="FunCoup" id="Q9VYR0">
    <property type="interactions" value="2199"/>
</dbReference>
<dbReference type="IntAct" id="Q9VYR0">
    <property type="interactions" value="2"/>
</dbReference>
<dbReference type="STRING" id="7227.FBpp0073458"/>
<dbReference type="GlyGen" id="Q9VYR0">
    <property type="glycosylation" value="1 site"/>
</dbReference>
<dbReference type="PaxDb" id="7227-FBpp0073458"/>
<dbReference type="DNASU" id="32167"/>
<dbReference type="EnsemblMetazoa" id="FBtr0073621">
    <property type="protein sequence ID" value="FBpp0073458"/>
    <property type="gene ID" value="FBgn0030364"/>
</dbReference>
<dbReference type="GeneID" id="32167"/>
<dbReference type="KEGG" id="dme:Dmel_CG15735"/>
<dbReference type="UCSC" id="CG15735-RA">
    <property type="organism name" value="d. melanogaster"/>
</dbReference>
<dbReference type="AGR" id="FB:FBgn0030364"/>
<dbReference type="CTD" id="407986"/>
<dbReference type="FlyBase" id="FBgn0030364">
    <property type="gene designation" value="Lsm12a"/>
</dbReference>
<dbReference type="VEuPathDB" id="VectorBase:FBgn0030364"/>
<dbReference type="eggNOG" id="KOG4401">
    <property type="taxonomic scope" value="Eukaryota"/>
</dbReference>
<dbReference type="GeneTree" id="ENSGT00390000006956"/>
<dbReference type="HOGENOM" id="CLU_073383_2_0_1"/>
<dbReference type="InParanoid" id="Q9VYR0"/>
<dbReference type="OMA" id="FEGELYC"/>
<dbReference type="OrthoDB" id="1057137at2759"/>
<dbReference type="PhylomeDB" id="Q9VYR0"/>
<dbReference type="BioGRID-ORCS" id="32167">
    <property type="hits" value="0 hits in 1 CRISPR screen"/>
</dbReference>
<dbReference type="GenomeRNAi" id="32167"/>
<dbReference type="PRO" id="PR:Q9VYR0"/>
<dbReference type="Proteomes" id="UP000000803">
    <property type="component" value="Chromosome X"/>
</dbReference>
<dbReference type="Bgee" id="FBgn0030364">
    <property type="expression patterns" value="Expressed in secondary oocyte and 199 other cell types or tissues"/>
</dbReference>
<dbReference type="GO" id="GO:0005634">
    <property type="term" value="C:nucleus"/>
    <property type="evidence" value="ECO:0000250"/>
    <property type="project" value="FlyBase"/>
</dbReference>
<dbReference type="GO" id="GO:0003723">
    <property type="term" value="F:RNA binding"/>
    <property type="evidence" value="ECO:0007669"/>
    <property type="project" value="InterPro"/>
</dbReference>
<dbReference type="GO" id="GO:0016070">
    <property type="term" value="P:RNA metabolic process"/>
    <property type="evidence" value="ECO:0000250"/>
    <property type="project" value="FlyBase"/>
</dbReference>
<dbReference type="CDD" id="cd01735">
    <property type="entry name" value="LSm12_N"/>
    <property type="match status" value="1"/>
</dbReference>
<dbReference type="InterPro" id="IPR047574">
    <property type="entry name" value="AD"/>
</dbReference>
<dbReference type="InterPro" id="IPR039683">
    <property type="entry name" value="Lsm12-like"/>
</dbReference>
<dbReference type="InterPro" id="IPR019181">
    <property type="entry name" value="LSM12_ABD"/>
</dbReference>
<dbReference type="InterPro" id="IPR048478">
    <property type="entry name" value="LSM12_LSM"/>
</dbReference>
<dbReference type="InterPro" id="IPR047575">
    <property type="entry name" value="Sm"/>
</dbReference>
<dbReference type="PANTHER" id="PTHR13542">
    <property type="entry name" value="LSM12 HOMOLOG"/>
    <property type="match status" value="1"/>
</dbReference>
<dbReference type="Pfam" id="PF09793">
    <property type="entry name" value="AD"/>
    <property type="match status" value="1"/>
</dbReference>
<dbReference type="Pfam" id="PF21166">
    <property type="entry name" value="LSM12_LSM"/>
    <property type="match status" value="1"/>
</dbReference>
<dbReference type="SMART" id="SM00995">
    <property type="entry name" value="AD"/>
    <property type="match status" value="1"/>
</dbReference>
<dbReference type="PROSITE" id="PS52001">
    <property type="entry name" value="AD"/>
    <property type="match status" value="1"/>
</dbReference>
<dbReference type="PROSITE" id="PS52002">
    <property type="entry name" value="SM"/>
    <property type="match status" value="1"/>
</dbReference>
<protein>
    <recommendedName>
        <fullName evidence="6 8">LSM12 homolog A</fullName>
    </recommendedName>
</protein>
<reference key="1">
    <citation type="journal article" date="2000" name="Science">
        <title>The genome sequence of Drosophila melanogaster.</title>
        <authorList>
            <person name="Adams M.D."/>
            <person name="Celniker S.E."/>
            <person name="Holt R.A."/>
            <person name="Evans C.A."/>
            <person name="Gocayne J.D."/>
            <person name="Amanatides P.G."/>
            <person name="Scherer S.E."/>
            <person name="Li P.W."/>
            <person name="Hoskins R.A."/>
            <person name="Galle R.F."/>
            <person name="George R.A."/>
            <person name="Lewis S.E."/>
            <person name="Richards S."/>
            <person name="Ashburner M."/>
            <person name="Henderson S.N."/>
            <person name="Sutton G.G."/>
            <person name="Wortman J.R."/>
            <person name="Yandell M.D."/>
            <person name="Zhang Q."/>
            <person name="Chen L.X."/>
            <person name="Brandon R.C."/>
            <person name="Rogers Y.-H.C."/>
            <person name="Blazej R.G."/>
            <person name="Champe M."/>
            <person name="Pfeiffer B.D."/>
            <person name="Wan K.H."/>
            <person name="Doyle C."/>
            <person name="Baxter E.G."/>
            <person name="Helt G."/>
            <person name="Nelson C.R."/>
            <person name="Miklos G.L.G."/>
            <person name="Abril J.F."/>
            <person name="Agbayani A."/>
            <person name="An H.-J."/>
            <person name="Andrews-Pfannkoch C."/>
            <person name="Baldwin D."/>
            <person name="Ballew R.M."/>
            <person name="Basu A."/>
            <person name="Baxendale J."/>
            <person name="Bayraktaroglu L."/>
            <person name="Beasley E.M."/>
            <person name="Beeson K.Y."/>
            <person name="Benos P.V."/>
            <person name="Berman B.P."/>
            <person name="Bhandari D."/>
            <person name="Bolshakov S."/>
            <person name="Borkova D."/>
            <person name="Botchan M.R."/>
            <person name="Bouck J."/>
            <person name="Brokstein P."/>
            <person name="Brottier P."/>
            <person name="Burtis K.C."/>
            <person name="Busam D.A."/>
            <person name="Butler H."/>
            <person name="Cadieu E."/>
            <person name="Center A."/>
            <person name="Chandra I."/>
            <person name="Cherry J.M."/>
            <person name="Cawley S."/>
            <person name="Dahlke C."/>
            <person name="Davenport L.B."/>
            <person name="Davies P."/>
            <person name="de Pablos B."/>
            <person name="Delcher A."/>
            <person name="Deng Z."/>
            <person name="Mays A.D."/>
            <person name="Dew I."/>
            <person name="Dietz S.M."/>
            <person name="Dodson K."/>
            <person name="Doup L.E."/>
            <person name="Downes M."/>
            <person name="Dugan-Rocha S."/>
            <person name="Dunkov B.C."/>
            <person name="Dunn P."/>
            <person name="Durbin K.J."/>
            <person name="Evangelista C.C."/>
            <person name="Ferraz C."/>
            <person name="Ferriera S."/>
            <person name="Fleischmann W."/>
            <person name="Fosler C."/>
            <person name="Gabrielian A.E."/>
            <person name="Garg N.S."/>
            <person name="Gelbart W.M."/>
            <person name="Glasser K."/>
            <person name="Glodek A."/>
            <person name="Gong F."/>
            <person name="Gorrell J.H."/>
            <person name="Gu Z."/>
            <person name="Guan P."/>
            <person name="Harris M."/>
            <person name="Harris N.L."/>
            <person name="Harvey D.A."/>
            <person name="Heiman T.J."/>
            <person name="Hernandez J.R."/>
            <person name="Houck J."/>
            <person name="Hostin D."/>
            <person name="Houston K.A."/>
            <person name="Howland T.J."/>
            <person name="Wei M.-H."/>
            <person name="Ibegwam C."/>
            <person name="Jalali M."/>
            <person name="Kalush F."/>
            <person name="Karpen G.H."/>
            <person name="Ke Z."/>
            <person name="Kennison J.A."/>
            <person name="Ketchum K.A."/>
            <person name="Kimmel B.E."/>
            <person name="Kodira C.D."/>
            <person name="Kraft C.L."/>
            <person name="Kravitz S."/>
            <person name="Kulp D."/>
            <person name="Lai Z."/>
            <person name="Lasko P."/>
            <person name="Lei Y."/>
            <person name="Levitsky A.A."/>
            <person name="Li J.H."/>
            <person name="Li Z."/>
            <person name="Liang Y."/>
            <person name="Lin X."/>
            <person name="Liu X."/>
            <person name="Mattei B."/>
            <person name="McIntosh T.C."/>
            <person name="McLeod M.P."/>
            <person name="McPherson D."/>
            <person name="Merkulov G."/>
            <person name="Milshina N.V."/>
            <person name="Mobarry C."/>
            <person name="Morris J."/>
            <person name="Moshrefi A."/>
            <person name="Mount S.M."/>
            <person name="Moy M."/>
            <person name="Murphy B."/>
            <person name="Murphy L."/>
            <person name="Muzny D.M."/>
            <person name="Nelson D.L."/>
            <person name="Nelson D.R."/>
            <person name="Nelson K.A."/>
            <person name="Nixon K."/>
            <person name="Nusskern D.R."/>
            <person name="Pacleb J.M."/>
            <person name="Palazzolo M."/>
            <person name="Pittman G.S."/>
            <person name="Pan S."/>
            <person name="Pollard J."/>
            <person name="Puri V."/>
            <person name="Reese M.G."/>
            <person name="Reinert K."/>
            <person name="Remington K."/>
            <person name="Saunders R.D.C."/>
            <person name="Scheeler F."/>
            <person name="Shen H."/>
            <person name="Shue B.C."/>
            <person name="Siden-Kiamos I."/>
            <person name="Simpson M."/>
            <person name="Skupski M.P."/>
            <person name="Smith T.J."/>
            <person name="Spier E."/>
            <person name="Spradling A.C."/>
            <person name="Stapleton M."/>
            <person name="Strong R."/>
            <person name="Sun E."/>
            <person name="Svirskas R."/>
            <person name="Tector C."/>
            <person name="Turner R."/>
            <person name="Venter E."/>
            <person name="Wang A.H."/>
            <person name="Wang X."/>
            <person name="Wang Z.-Y."/>
            <person name="Wassarman D.A."/>
            <person name="Weinstock G.M."/>
            <person name="Weissenbach J."/>
            <person name="Williams S.M."/>
            <person name="Woodage T."/>
            <person name="Worley K.C."/>
            <person name="Wu D."/>
            <person name="Yang S."/>
            <person name="Yao Q.A."/>
            <person name="Ye J."/>
            <person name="Yeh R.-F."/>
            <person name="Zaveri J.S."/>
            <person name="Zhan M."/>
            <person name="Zhang G."/>
            <person name="Zhao Q."/>
            <person name="Zheng L."/>
            <person name="Zheng X.H."/>
            <person name="Zhong F.N."/>
            <person name="Zhong W."/>
            <person name="Zhou X."/>
            <person name="Zhu S.C."/>
            <person name="Zhu X."/>
            <person name="Smith H.O."/>
            <person name="Gibbs R.A."/>
            <person name="Myers E.W."/>
            <person name="Rubin G.M."/>
            <person name="Venter J.C."/>
        </authorList>
    </citation>
    <scope>NUCLEOTIDE SEQUENCE [LARGE SCALE GENOMIC DNA]</scope>
    <source>
        <strain>Berkeley</strain>
    </source>
</reference>
<reference key="2">
    <citation type="journal article" date="2002" name="Genome Biol.">
        <title>Annotation of the Drosophila melanogaster euchromatic genome: a systematic review.</title>
        <authorList>
            <person name="Misra S."/>
            <person name="Crosby M.A."/>
            <person name="Mungall C.J."/>
            <person name="Matthews B.B."/>
            <person name="Campbell K.S."/>
            <person name="Hradecky P."/>
            <person name="Huang Y."/>
            <person name="Kaminker J.S."/>
            <person name="Millburn G.H."/>
            <person name="Prochnik S.E."/>
            <person name="Smith C.D."/>
            <person name="Tupy J.L."/>
            <person name="Whitfield E.J."/>
            <person name="Bayraktaroglu L."/>
            <person name="Berman B.P."/>
            <person name="Bettencourt B.R."/>
            <person name="Celniker S.E."/>
            <person name="de Grey A.D.N.J."/>
            <person name="Drysdale R.A."/>
            <person name="Harris N.L."/>
            <person name="Richter J."/>
            <person name="Russo S."/>
            <person name="Schroeder A.J."/>
            <person name="Shu S.Q."/>
            <person name="Stapleton M."/>
            <person name="Yamada C."/>
            <person name="Ashburner M."/>
            <person name="Gelbart W.M."/>
            <person name="Rubin G.M."/>
            <person name="Lewis S.E."/>
        </authorList>
    </citation>
    <scope>GENOME REANNOTATION</scope>
    <source>
        <strain>Berkeley</strain>
    </source>
</reference>
<reference key="3">
    <citation type="journal article" date="2002" name="Genome Biol.">
        <title>A Drosophila full-length cDNA resource.</title>
        <authorList>
            <person name="Stapleton M."/>
            <person name="Carlson J.W."/>
            <person name="Brokstein P."/>
            <person name="Yu C."/>
            <person name="Champe M."/>
            <person name="George R.A."/>
            <person name="Guarin H."/>
            <person name="Kronmiller B."/>
            <person name="Pacleb J.M."/>
            <person name="Park S."/>
            <person name="Wan K.H."/>
            <person name="Rubin G.M."/>
            <person name="Celniker S.E."/>
        </authorList>
    </citation>
    <scope>NUCLEOTIDE SEQUENCE [LARGE SCALE MRNA]</scope>
    <source>
        <strain>Berkeley</strain>
        <tissue>Embryo</tissue>
    </source>
</reference>
<reference key="4">
    <citation type="journal article" date="2017" name="Mol. Cell">
        <title>LSM12 and ME31B/DDX6 Define Distinct Modes of Posttranscriptional Regulation by ATAXIN-2 Protein Complex in Drosophila Circadian Pacemaker Neurons.</title>
        <authorList>
            <person name="Lee J."/>
            <person name="Yoo E."/>
            <person name="Lee H."/>
            <person name="Park K."/>
            <person name="Hur J.H."/>
            <person name="Lim C."/>
        </authorList>
    </citation>
    <scope>FUNCTION</scope>
    <scope>IDENTIFICATION IN A COMPLEX WITH TYF; ATX2 AND PABP</scope>
    <scope>INTERACTION WITH TYF; ATX2 AND PABP</scope>
    <scope>DISRUPTION PHENOTYPE</scope>
</reference>
<reference key="5">
    <citation type="journal article" date="2019" name="G3 (Bethesda)">
        <title>Composition of the Survival Motor Neuron (SMN) Complex in Drosophila melanogaster.</title>
        <authorList>
            <person name="Matera A.G."/>
            <person name="Raimer A.C."/>
            <person name="Schmidt C.A."/>
            <person name="Kelly J.A."/>
            <person name="Droby G.N."/>
            <person name="Baillat D."/>
            <person name="Ten Have S."/>
            <person name="Lamond A.I."/>
            <person name="Wagner E.J."/>
            <person name="Gray K.M."/>
        </authorList>
    </citation>
    <scope>SIMILARITY WITH LSM12</scope>
    <scope>NOMENCLATURE</scope>
</reference>
<sequence length="217" mass="23746">MAAAAASAVNAVNDCFSIGSTVVCTTCFNEEVEGEVLAFDHNTKMLILKCRSKSTEELSDIYAMNLSLCSNVQVIKECNGNFDDPQKLNLEQVKMRLRKTVERRQDYLKSKNADVSPEAQELYRAIAKQYGYNEVSWQGLNIQILNEVTISPPYRVDNVVSSSNNETSCNYIKRIIKQFFNTRPSPVPESGAAASTSSPSVSPTSSSLASGSPVPAN</sequence>
<gene>
    <name evidence="6 8" type="primary">Lsm12a</name>
    <name evidence="5" type="synonym">Lsm12</name>
    <name evidence="8" type="ORF">CG15735</name>
</gene>
<proteinExistence type="evidence at protein level"/>
<keyword id="KW-1185">Reference proteome</keyword>
<feature type="chain" id="PRO_0000305134" description="LSM12 homolog A">
    <location>
        <begin position="1"/>
        <end position="217"/>
    </location>
</feature>
<feature type="domain" description="Sm" evidence="2">
    <location>
        <begin position="9"/>
        <end position="78"/>
    </location>
</feature>
<feature type="domain" description="AD" evidence="1">
    <location>
        <begin position="86"/>
        <end position="184"/>
    </location>
</feature>
<feature type="region of interest" description="Disordered" evidence="3">
    <location>
        <begin position="185"/>
        <end position="217"/>
    </location>
</feature>
<feature type="compositionally biased region" description="Low complexity" evidence="3">
    <location>
        <begin position="190"/>
        <end position="217"/>
    </location>
</feature>
<name>LSM12_DROME</name>